<sequence>KRALQSEKRRQHNASRRSMTRTYLKKVIAAIASGDKAAATAAFAVAQPIMDRMATKGLIHKNKAARHKSRLS</sequence>
<dbReference type="EMBL" id="U20496">
    <property type="protein sequence ID" value="AAA86996.1"/>
    <property type="status" value="ALT_SEQ"/>
    <property type="molecule type" value="Genomic_DNA"/>
</dbReference>
<dbReference type="PIR" id="S58765">
    <property type="entry name" value="S58765"/>
</dbReference>
<dbReference type="SMR" id="P45786"/>
<dbReference type="eggNOG" id="COG0268">
    <property type="taxonomic scope" value="Bacteria"/>
</dbReference>
<dbReference type="GO" id="GO:0005829">
    <property type="term" value="C:cytosol"/>
    <property type="evidence" value="ECO:0007669"/>
    <property type="project" value="TreeGrafter"/>
</dbReference>
<dbReference type="GO" id="GO:0015935">
    <property type="term" value="C:small ribosomal subunit"/>
    <property type="evidence" value="ECO:0007669"/>
    <property type="project" value="TreeGrafter"/>
</dbReference>
<dbReference type="GO" id="GO:0070181">
    <property type="term" value="F:small ribosomal subunit rRNA binding"/>
    <property type="evidence" value="ECO:0007669"/>
    <property type="project" value="TreeGrafter"/>
</dbReference>
<dbReference type="GO" id="GO:0003735">
    <property type="term" value="F:structural constituent of ribosome"/>
    <property type="evidence" value="ECO:0007669"/>
    <property type="project" value="InterPro"/>
</dbReference>
<dbReference type="GO" id="GO:0006412">
    <property type="term" value="P:translation"/>
    <property type="evidence" value="ECO:0007669"/>
    <property type="project" value="InterPro"/>
</dbReference>
<dbReference type="FunFam" id="1.20.58.110:FF:000001">
    <property type="entry name" value="30S ribosomal protein S20"/>
    <property type="match status" value="1"/>
</dbReference>
<dbReference type="Gene3D" id="1.20.58.110">
    <property type="entry name" value="Ribosomal protein S20"/>
    <property type="match status" value="1"/>
</dbReference>
<dbReference type="InterPro" id="IPR002583">
    <property type="entry name" value="Ribosomal_bS20"/>
</dbReference>
<dbReference type="InterPro" id="IPR036510">
    <property type="entry name" value="Ribosomal_bS20_sf"/>
</dbReference>
<dbReference type="NCBIfam" id="TIGR00029">
    <property type="entry name" value="S20"/>
    <property type="match status" value="1"/>
</dbReference>
<dbReference type="PANTHER" id="PTHR33398">
    <property type="entry name" value="30S RIBOSOMAL PROTEIN S20"/>
    <property type="match status" value="1"/>
</dbReference>
<dbReference type="PANTHER" id="PTHR33398:SF1">
    <property type="entry name" value="SMALL RIBOSOMAL SUBUNIT PROTEIN BS20C"/>
    <property type="match status" value="1"/>
</dbReference>
<dbReference type="Pfam" id="PF01649">
    <property type="entry name" value="Ribosomal_S20p"/>
    <property type="match status" value="1"/>
</dbReference>
<dbReference type="SUPFAM" id="SSF46992">
    <property type="entry name" value="Ribosomal protein S20"/>
    <property type="match status" value="1"/>
</dbReference>
<gene>
    <name type="primary">rpsT</name>
</gene>
<organism>
    <name type="scientific">Aeromonas hydrophila</name>
    <dbReference type="NCBI Taxonomy" id="644"/>
    <lineage>
        <taxon>Bacteria</taxon>
        <taxon>Pseudomonadati</taxon>
        <taxon>Pseudomonadota</taxon>
        <taxon>Gammaproteobacteria</taxon>
        <taxon>Aeromonadales</taxon>
        <taxon>Aeromonadaceae</taxon>
        <taxon>Aeromonas</taxon>
    </lineage>
</organism>
<protein>
    <recommendedName>
        <fullName evidence="2">Small ribosomal subunit protein bS20</fullName>
    </recommendedName>
    <alternativeName>
        <fullName>30S ribosomal protein S20</fullName>
    </alternativeName>
</protein>
<keyword id="KW-0687">Ribonucleoprotein</keyword>
<keyword id="KW-0689">Ribosomal protein</keyword>
<keyword id="KW-0694">RNA-binding</keyword>
<keyword id="KW-0699">rRNA-binding</keyword>
<name>RS20_AERHY</name>
<feature type="chain" id="PRO_0000167905" description="Small ribosomal subunit protein bS20">
    <location>
        <begin position="1" status="less than"/>
        <end position="72" status="greater than"/>
    </location>
</feature>
<feature type="non-terminal residue">
    <location>
        <position position="1"/>
    </location>
</feature>
<feature type="non-terminal residue">
    <location>
        <position position="72"/>
    </location>
</feature>
<proteinExistence type="inferred from homology"/>
<comment type="function">
    <text evidence="1">Binds directly to 16S ribosomal RNA.</text>
</comment>
<comment type="similarity">
    <text evidence="2">Belongs to the bacterial ribosomal protein bS20 family.</text>
</comment>
<accession>P45786</accession>
<reference key="1">
    <citation type="journal article" date="1995" name="Biochim. Biophys. Acta">
        <title>Conserved amino acid residues in the primary structure of ribosomal protein S20 from selected Gram-negative bacteria.</title>
        <authorList>
            <person name="Nemec A."/>
            <person name="Haywood-Farmer A."/>
            <person name="Mackie G.A."/>
        </authorList>
    </citation>
    <scope>NUCLEOTIDE SEQUENCE [GENOMIC DNA]</scope>
    <source>
        <strain>ATCC 35654 / DSM 6173</strain>
        <strain>ATCC 49140</strain>
    </source>
</reference>
<evidence type="ECO:0000250" key="1"/>
<evidence type="ECO:0000305" key="2"/>